<comment type="function">
    <text>Transcriptional repressor of genes that require a bHLH protein for their transcription.</text>
</comment>
<comment type="subunit">
    <text evidence="1">Transcription repression requires formation of a complex with a corepressor protein of the Groucho/TLE family.</text>
</comment>
<comment type="subcellular location">
    <subcellularLocation>
        <location>Nucleus</location>
    </subcellularLocation>
</comment>
<comment type="domain">
    <text>Has a particular type of basic domain (presence of a helix-interrupting proline) that binds to the N-box (CACNAG), rather than the canonical E-box (CANNTG).</text>
</comment>
<comment type="domain">
    <text evidence="1">The C-terminal WRPW motif is a transcriptional repression domain necessary for the interaction with Groucho/TLE family members, transcriptional corepressors recruited to specific target DNA by Hairy-related proteins.</text>
</comment>
<organism>
    <name type="scientific">Rattus norvegicus</name>
    <name type="common">Rat</name>
    <dbReference type="NCBI Taxonomy" id="10116"/>
    <lineage>
        <taxon>Eukaryota</taxon>
        <taxon>Metazoa</taxon>
        <taxon>Chordata</taxon>
        <taxon>Craniata</taxon>
        <taxon>Vertebrata</taxon>
        <taxon>Euteleostomi</taxon>
        <taxon>Mammalia</taxon>
        <taxon>Eutheria</taxon>
        <taxon>Euarchontoglires</taxon>
        <taxon>Glires</taxon>
        <taxon>Rodentia</taxon>
        <taxon>Myomorpha</taxon>
        <taxon>Muroidea</taxon>
        <taxon>Muridae</taxon>
        <taxon>Murinae</taxon>
        <taxon>Rattus</taxon>
    </lineage>
</organism>
<proteinExistence type="evidence at transcript level"/>
<protein>
    <recommendedName>
        <fullName>Transcription factor HES-2</fullName>
    </recommendedName>
    <alternativeName>
        <fullName>Hairy and enhancer of split 2</fullName>
    </alternativeName>
</protein>
<feature type="chain" id="PRO_0000127208" description="Transcription factor HES-2">
    <location>
        <begin position="1"/>
        <end position="157"/>
    </location>
</feature>
<feature type="domain" description="bHLH" evidence="3">
    <location>
        <begin position="13"/>
        <end position="70"/>
    </location>
</feature>
<feature type="domain" description="Orange" evidence="2">
    <location>
        <begin position="86"/>
        <end position="119"/>
    </location>
</feature>
<feature type="region of interest" description="Disordered" evidence="4">
    <location>
        <begin position="124"/>
        <end position="157"/>
    </location>
</feature>
<feature type="short sequence motif" description="WRPW motif">
    <location>
        <begin position="154"/>
        <end position="157"/>
    </location>
</feature>
<feature type="compositionally biased region" description="Low complexity" evidence="4">
    <location>
        <begin position="125"/>
        <end position="139"/>
    </location>
</feature>
<feature type="compositionally biased region" description="Pro residues" evidence="4">
    <location>
        <begin position="140"/>
        <end position="149"/>
    </location>
</feature>
<keyword id="KW-0238">DNA-binding</keyword>
<keyword id="KW-0539">Nucleus</keyword>
<keyword id="KW-1185">Reference proteome</keyword>
<keyword id="KW-0678">Repressor</keyword>
<keyword id="KW-0804">Transcription</keyword>
<keyword id="KW-0805">Transcription regulation</keyword>
<dbReference type="EMBL" id="D14029">
    <property type="protein sequence ID" value="BAA03118.1"/>
    <property type="molecule type" value="mRNA"/>
</dbReference>
<dbReference type="PIR" id="S35037">
    <property type="entry name" value="S35037"/>
</dbReference>
<dbReference type="RefSeq" id="NP_062109.1">
    <property type="nucleotide sequence ID" value="NM_019236.1"/>
</dbReference>
<dbReference type="RefSeq" id="XP_063143331.1">
    <property type="nucleotide sequence ID" value="XM_063287261.1"/>
</dbReference>
<dbReference type="SMR" id="P35429"/>
<dbReference type="ELM" id="P35429"/>
<dbReference type="FunCoup" id="P35429">
    <property type="interactions" value="46"/>
</dbReference>
<dbReference type="STRING" id="10116.ENSRNOP00000014035"/>
<dbReference type="PhosphoSitePlus" id="P35429"/>
<dbReference type="PaxDb" id="10116-ENSRNOP00000014035"/>
<dbReference type="Ensembl" id="ENSRNOT00000014035.3">
    <property type="protein sequence ID" value="ENSRNOP00000014035.1"/>
    <property type="gene ID" value="ENSRNOG00000010490.3"/>
</dbReference>
<dbReference type="GeneID" id="29567"/>
<dbReference type="KEGG" id="rno:29567"/>
<dbReference type="UCSC" id="RGD:62082">
    <property type="organism name" value="rat"/>
</dbReference>
<dbReference type="AGR" id="RGD:62082"/>
<dbReference type="CTD" id="54626"/>
<dbReference type="RGD" id="62082">
    <property type="gene designation" value="Hes2"/>
</dbReference>
<dbReference type="eggNOG" id="KOG4304">
    <property type="taxonomic scope" value="Eukaryota"/>
</dbReference>
<dbReference type="GeneTree" id="ENSGT00940000161602"/>
<dbReference type="HOGENOM" id="CLU_068550_5_0_1"/>
<dbReference type="InParanoid" id="P35429"/>
<dbReference type="OMA" id="NSTGPMW"/>
<dbReference type="OrthoDB" id="6085656at2759"/>
<dbReference type="PhylomeDB" id="P35429"/>
<dbReference type="TreeFam" id="TF351373"/>
<dbReference type="PRO" id="PR:P35429"/>
<dbReference type="Proteomes" id="UP000002494">
    <property type="component" value="Chromosome 5"/>
</dbReference>
<dbReference type="Bgee" id="ENSRNOG00000010490">
    <property type="expression patterns" value="Expressed in heart and 12 other cell types or tissues"/>
</dbReference>
<dbReference type="GO" id="GO:0005634">
    <property type="term" value="C:nucleus"/>
    <property type="evidence" value="ECO:0000318"/>
    <property type="project" value="GO_Central"/>
</dbReference>
<dbReference type="GO" id="GO:0001227">
    <property type="term" value="F:DNA-binding transcription repressor activity, RNA polymerase II-specific"/>
    <property type="evidence" value="ECO:0000314"/>
    <property type="project" value="NTNU_SB"/>
</dbReference>
<dbReference type="GO" id="GO:0003690">
    <property type="term" value="F:double-stranded DNA binding"/>
    <property type="evidence" value="ECO:0000314"/>
    <property type="project" value="RGD"/>
</dbReference>
<dbReference type="GO" id="GO:0046983">
    <property type="term" value="F:protein dimerization activity"/>
    <property type="evidence" value="ECO:0007669"/>
    <property type="project" value="InterPro"/>
</dbReference>
<dbReference type="GO" id="GO:0000978">
    <property type="term" value="F:RNA polymerase II cis-regulatory region sequence-specific DNA binding"/>
    <property type="evidence" value="ECO:0000315"/>
    <property type="project" value="NTNU_SB"/>
</dbReference>
<dbReference type="GO" id="GO:1990837">
    <property type="term" value="F:sequence-specific double-stranded DNA binding"/>
    <property type="evidence" value="ECO:0000266"/>
    <property type="project" value="RGD"/>
</dbReference>
<dbReference type="GO" id="GO:0045892">
    <property type="term" value="P:negative regulation of DNA-templated transcription"/>
    <property type="evidence" value="ECO:0000314"/>
    <property type="project" value="RGD"/>
</dbReference>
<dbReference type="GO" id="GO:0000122">
    <property type="term" value="P:negative regulation of transcription by RNA polymerase II"/>
    <property type="evidence" value="ECO:0000314"/>
    <property type="project" value="NTNU_SB"/>
</dbReference>
<dbReference type="GO" id="GO:0006355">
    <property type="term" value="P:regulation of DNA-templated transcription"/>
    <property type="evidence" value="ECO:0000304"/>
    <property type="project" value="RGD"/>
</dbReference>
<dbReference type="GO" id="GO:0050767">
    <property type="term" value="P:regulation of neurogenesis"/>
    <property type="evidence" value="ECO:0000318"/>
    <property type="project" value="GO_Central"/>
</dbReference>
<dbReference type="FunFam" id="4.10.280.10:FF:000009">
    <property type="entry name" value="Transcription factor HES-1"/>
    <property type="match status" value="1"/>
</dbReference>
<dbReference type="Gene3D" id="4.10.280.10">
    <property type="entry name" value="Helix-loop-helix DNA-binding domain"/>
    <property type="match status" value="1"/>
</dbReference>
<dbReference type="InterPro" id="IPR011598">
    <property type="entry name" value="bHLH_dom"/>
</dbReference>
<dbReference type="InterPro" id="IPR050370">
    <property type="entry name" value="HES_HEY"/>
</dbReference>
<dbReference type="InterPro" id="IPR036638">
    <property type="entry name" value="HLH_DNA-bd_sf"/>
</dbReference>
<dbReference type="InterPro" id="IPR003650">
    <property type="entry name" value="Orange_dom"/>
</dbReference>
<dbReference type="PANTHER" id="PTHR10985">
    <property type="entry name" value="BASIC HELIX-LOOP-HELIX TRANSCRIPTION FACTOR, HES-RELATED"/>
    <property type="match status" value="1"/>
</dbReference>
<dbReference type="Pfam" id="PF07527">
    <property type="entry name" value="Hairy_orange"/>
    <property type="match status" value="1"/>
</dbReference>
<dbReference type="Pfam" id="PF00010">
    <property type="entry name" value="HLH"/>
    <property type="match status" value="1"/>
</dbReference>
<dbReference type="SMART" id="SM00353">
    <property type="entry name" value="HLH"/>
    <property type="match status" value="1"/>
</dbReference>
<dbReference type="SMART" id="SM00511">
    <property type="entry name" value="ORANGE"/>
    <property type="match status" value="1"/>
</dbReference>
<dbReference type="SUPFAM" id="SSF47459">
    <property type="entry name" value="HLH, helix-loop-helix DNA-binding domain"/>
    <property type="match status" value="1"/>
</dbReference>
<dbReference type="SUPFAM" id="SSF158457">
    <property type="entry name" value="Orange domain-like"/>
    <property type="match status" value="1"/>
</dbReference>
<dbReference type="PROSITE" id="PS50888">
    <property type="entry name" value="BHLH"/>
    <property type="match status" value="1"/>
</dbReference>
<dbReference type="PROSITE" id="PS51054">
    <property type="entry name" value="ORANGE"/>
    <property type="match status" value="1"/>
</dbReference>
<evidence type="ECO:0000250" key="1"/>
<evidence type="ECO:0000255" key="2">
    <source>
        <dbReference type="PROSITE-ProRule" id="PRU00380"/>
    </source>
</evidence>
<evidence type="ECO:0000255" key="3">
    <source>
        <dbReference type="PROSITE-ProRule" id="PRU00981"/>
    </source>
</evidence>
<evidence type="ECO:0000256" key="4">
    <source>
        <dbReference type="SAM" id="MobiDB-lite"/>
    </source>
</evidence>
<reference key="1">
    <citation type="journal article" date="1993" name="Eur. J. Biochem.">
        <title>Molecular characterization of HES-2, a mammalian helix-loop-helix factor structurally related to Drosophila hairy and Enhancer of split.</title>
        <authorList>
            <person name="Ishibashi M."/>
            <person name="Sasai Y."/>
            <person name="Nakanishi S."/>
            <person name="Kageyama R."/>
        </authorList>
    </citation>
    <scope>NUCLEOTIDE SEQUENCE [MRNA]</scope>
    <source>
        <strain>Sprague-Dawley</strain>
        <tissue>Embryonic brain</tissue>
    </source>
</reference>
<gene>
    <name type="primary">Hes2</name>
    <name type="synonym">Hes-2</name>
</gene>
<accession>P35429</accession>
<name>HES2_RAT</name>
<sequence>MRLPRGVGDAAELRKSLKPLLEKRRRARINESLSQLKGLVLPLLGAETSRYSKLEKADILEMTVRFLREQPASVCSTEAPGSLDSYLEGYRACLARLARVLPACSVLEPAVSARLLEHLRQRTVSGGPPSLTPASASAPAPSPPVPPPSSLGLWRPW</sequence>